<evidence type="ECO:0000255" key="1">
    <source>
        <dbReference type="HAMAP-Rule" id="MF_00258"/>
    </source>
</evidence>
<name>MURI_SHEB2</name>
<feature type="chain" id="PRO_1000125617" description="Glutamate racemase">
    <location>
        <begin position="1"/>
        <end position="274"/>
    </location>
</feature>
<feature type="active site" description="Proton donor/acceptor" evidence="1">
    <location>
        <position position="73"/>
    </location>
</feature>
<feature type="active site" description="Proton donor/acceptor" evidence="1">
    <location>
        <position position="183"/>
    </location>
</feature>
<feature type="binding site" evidence="1">
    <location>
        <begin position="9"/>
        <end position="10"/>
    </location>
    <ligand>
        <name>substrate</name>
    </ligand>
</feature>
<feature type="binding site" evidence="1">
    <location>
        <begin position="41"/>
        <end position="42"/>
    </location>
    <ligand>
        <name>substrate</name>
    </ligand>
</feature>
<feature type="binding site" evidence="1">
    <location>
        <begin position="74"/>
        <end position="75"/>
    </location>
    <ligand>
        <name>substrate</name>
    </ligand>
</feature>
<feature type="binding site" evidence="1">
    <location>
        <begin position="184"/>
        <end position="185"/>
    </location>
    <ligand>
        <name>substrate</name>
    </ligand>
</feature>
<sequence>MSRPILVFDSGIGGLSVLAEIRKSLPHSDYCYLFDNARLPYGELEEQVLIAGCVALVCDLVARTNAMIVVVACNTASTVVLPALRANLSIPVVGVVPAIKPAAQMSKSKRIGLLATPGTVKRHYTHSLISQFADDCHVELFGCSELVMMAEQKIATGEMDMHRLADLLAPVVAAQLDVLVLGCTHFPMIQAELQQVLGAGVTLMDSGAAIAKRVVTLLTQQNFIVEQRRVTNEREAVGESAMQAFYTKAEISEGLTTTLIDCGFSTIERITTTN</sequence>
<reference key="1">
    <citation type="submission" date="2008-12" db="EMBL/GenBank/DDBJ databases">
        <title>Complete sequence of chromosome of Shewanella baltica OS223.</title>
        <authorList>
            <consortium name="US DOE Joint Genome Institute"/>
            <person name="Lucas S."/>
            <person name="Copeland A."/>
            <person name="Lapidus A."/>
            <person name="Glavina del Rio T."/>
            <person name="Dalin E."/>
            <person name="Tice H."/>
            <person name="Bruce D."/>
            <person name="Goodwin L."/>
            <person name="Pitluck S."/>
            <person name="Chertkov O."/>
            <person name="Meincke L."/>
            <person name="Brettin T."/>
            <person name="Detter J.C."/>
            <person name="Han C."/>
            <person name="Kuske C.R."/>
            <person name="Larimer F."/>
            <person name="Land M."/>
            <person name="Hauser L."/>
            <person name="Kyrpides N."/>
            <person name="Ovchinnikova G."/>
            <person name="Brettar I."/>
            <person name="Rodrigues J."/>
            <person name="Konstantinidis K."/>
            <person name="Tiedje J."/>
        </authorList>
    </citation>
    <scope>NUCLEOTIDE SEQUENCE [LARGE SCALE GENOMIC DNA]</scope>
    <source>
        <strain>OS223</strain>
    </source>
</reference>
<accession>B8EBM4</accession>
<keyword id="KW-0133">Cell shape</keyword>
<keyword id="KW-0961">Cell wall biogenesis/degradation</keyword>
<keyword id="KW-0413">Isomerase</keyword>
<keyword id="KW-0573">Peptidoglycan synthesis</keyword>
<gene>
    <name evidence="1" type="primary">murI</name>
    <name type="ordered locus">Sbal223_4075</name>
</gene>
<proteinExistence type="inferred from homology"/>
<protein>
    <recommendedName>
        <fullName evidence="1">Glutamate racemase</fullName>
        <ecNumber evidence="1">5.1.1.3</ecNumber>
    </recommendedName>
</protein>
<dbReference type="EC" id="5.1.1.3" evidence="1"/>
<dbReference type="EMBL" id="CP001252">
    <property type="protein sequence ID" value="ACK48548.1"/>
    <property type="molecule type" value="Genomic_DNA"/>
</dbReference>
<dbReference type="RefSeq" id="WP_012588812.1">
    <property type="nucleotide sequence ID" value="NC_011663.1"/>
</dbReference>
<dbReference type="SMR" id="B8EBM4"/>
<dbReference type="KEGG" id="sbp:Sbal223_4075"/>
<dbReference type="HOGENOM" id="CLU_052344_2_0_6"/>
<dbReference type="UniPathway" id="UPA00219"/>
<dbReference type="Proteomes" id="UP000002507">
    <property type="component" value="Chromosome"/>
</dbReference>
<dbReference type="GO" id="GO:0008881">
    <property type="term" value="F:glutamate racemase activity"/>
    <property type="evidence" value="ECO:0007669"/>
    <property type="project" value="UniProtKB-UniRule"/>
</dbReference>
<dbReference type="GO" id="GO:0071555">
    <property type="term" value="P:cell wall organization"/>
    <property type="evidence" value="ECO:0007669"/>
    <property type="project" value="UniProtKB-KW"/>
</dbReference>
<dbReference type="GO" id="GO:0009252">
    <property type="term" value="P:peptidoglycan biosynthetic process"/>
    <property type="evidence" value="ECO:0007669"/>
    <property type="project" value="UniProtKB-UniRule"/>
</dbReference>
<dbReference type="GO" id="GO:0008360">
    <property type="term" value="P:regulation of cell shape"/>
    <property type="evidence" value="ECO:0007669"/>
    <property type="project" value="UniProtKB-KW"/>
</dbReference>
<dbReference type="FunFam" id="3.40.50.1860:FF:000001">
    <property type="entry name" value="Glutamate racemase"/>
    <property type="match status" value="1"/>
</dbReference>
<dbReference type="Gene3D" id="3.40.50.1860">
    <property type="match status" value="2"/>
</dbReference>
<dbReference type="HAMAP" id="MF_00258">
    <property type="entry name" value="Glu_racemase"/>
    <property type="match status" value="1"/>
</dbReference>
<dbReference type="InterPro" id="IPR015942">
    <property type="entry name" value="Asp/Glu/hydantoin_racemase"/>
</dbReference>
<dbReference type="InterPro" id="IPR001920">
    <property type="entry name" value="Asp/Glu_race"/>
</dbReference>
<dbReference type="InterPro" id="IPR018187">
    <property type="entry name" value="Asp/Glu_racemase_AS_1"/>
</dbReference>
<dbReference type="InterPro" id="IPR033134">
    <property type="entry name" value="Asp/Glu_racemase_AS_2"/>
</dbReference>
<dbReference type="InterPro" id="IPR004391">
    <property type="entry name" value="Glu_race"/>
</dbReference>
<dbReference type="NCBIfam" id="TIGR00067">
    <property type="entry name" value="glut_race"/>
    <property type="match status" value="1"/>
</dbReference>
<dbReference type="PANTHER" id="PTHR21198">
    <property type="entry name" value="GLUTAMATE RACEMASE"/>
    <property type="match status" value="1"/>
</dbReference>
<dbReference type="PANTHER" id="PTHR21198:SF2">
    <property type="entry name" value="GLUTAMATE RACEMASE"/>
    <property type="match status" value="1"/>
</dbReference>
<dbReference type="Pfam" id="PF01177">
    <property type="entry name" value="Asp_Glu_race"/>
    <property type="match status" value="1"/>
</dbReference>
<dbReference type="SUPFAM" id="SSF53681">
    <property type="entry name" value="Aspartate/glutamate racemase"/>
    <property type="match status" value="2"/>
</dbReference>
<dbReference type="PROSITE" id="PS00923">
    <property type="entry name" value="ASP_GLU_RACEMASE_1"/>
    <property type="match status" value="1"/>
</dbReference>
<dbReference type="PROSITE" id="PS00924">
    <property type="entry name" value="ASP_GLU_RACEMASE_2"/>
    <property type="match status" value="1"/>
</dbReference>
<organism>
    <name type="scientific">Shewanella baltica (strain OS223)</name>
    <dbReference type="NCBI Taxonomy" id="407976"/>
    <lineage>
        <taxon>Bacteria</taxon>
        <taxon>Pseudomonadati</taxon>
        <taxon>Pseudomonadota</taxon>
        <taxon>Gammaproteobacteria</taxon>
        <taxon>Alteromonadales</taxon>
        <taxon>Shewanellaceae</taxon>
        <taxon>Shewanella</taxon>
    </lineage>
</organism>
<comment type="function">
    <text evidence="1">Provides the (R)-glutamate required for cell wall biosynthesis.</text>
</comment>
<comment type="catalytic activity">
    <reaction evidence="1">
        <text>L-glutamate = D-glutamate</text>
        <dbReference type="Rhea" id="RHEA:12813"/>
        <dbReference type="ChEBI" id="CHEBI:29985"/>
        <dbReference type="ChEBI" id="CHEBI:29986"/>
        <dbReference type="EC" id="5.1.1.3"/>
    </reaction>
</comment>
<comment type="pathway">
    <text evidence="1">Cell wall biogenesis; peptidoglycan biosynthesis.</text>
</comment>
<comment type="similarity">
    <text evidence="1">Belongs to the aspartate/glutamate racemases family.</text>
</comment>